<dbReference type="EMBL" id="DP000009">
    <property type="protein sequence ID" value="ABF95105.1"/>
    <property type="molecule type" value="Genomic_DNA"/>
</dbReference>
<dbReference type="EMBL" id="AP008209">
    <property type="protein sequence ID" value="BAF11545.1"/>
    <property type="status" value="ALT_SEQ"/>
    <property type="molecule type" value="Genomic_DNA"/>
</dbReference>
<dbReference type="EMBL" id="AP014959">
    <property type="protein sequence ID" value="BAS83374.1"/>
    <property type="molecule type" value="Genomic_DNA"/>
</dbReference>
<dbReference type="EMBL" id="CM000140">
    <property type="protein sequence ID" value="EEE58741.1"/>
    <property type="molecule type" value="Genomic_DNA"/>
</dbReference>
<dbReference type="RefSeq" id="XP_015632668.1">
    <property type="nucleotide sequence ID" value="XM_015777182.1"/>
</dbReference>
<dbReference type="SMR" id="Q10NQ3"/>
<dbReference type="FunCoup" id="Q10NQ3">
    <property type="interactions" value="201"/>
</dbReference>
<dbReference type="STRING" id="39947.Q10NQ3"/>
<dbReference type="iPTMnet" id="Q10NQ3"/>
<dbReference type="PaxDb" id="39947-Q10NQ3"/>
<dbReference type="EnsemblPlants" id="Os03t0262900-02">
    <property type="protein sequence ID" value="Os03t0262900-02"/>
    <property type="gene ID" value="Os03g0262900"/>
</dbReference>
<dbReference type="Gramene" id="Os03t0262900-02">
    <property type="protein sequence ID" value="Os03t0262900-02"/>
    <property type="gene ID" value="Os03g0262900"/>
</dbReference>
<dbReference type="KEGG" id="dosa:Os03g0262900"/>
<dbReference type="eggNOG" id="KOG2319">
    <property type="taxonomic scope" value="Eukaryota"/>
</dbReference>
<dbReference type="HOGENOM" id="CLU_2458549_0_0_1"/>
<dbReference type="InParanoid" id="Q10NQ3"/>
<dbReference type="OrthoDB" id="300289at2759"/>
<dbReference type="PlantReactome" id="R-OSA-9626305">
    <property type="pathway name" value="Regulatory network of nutrient accumulation"/>
</dbReference>
<dbReference type="Proteomes" id="UP000000763">
    <property type="component" value="Chromosome 3"/>
</dbReference>
<dbReference type="Proteomes" id="UP000007752">
    <property type="component" value="Chromosome 3"/>
</dbReference>
<dbReference type="Proteomes" id="UP000059680">
    <property type="component" value="Chromosome 3"/>
</dbReference>
<dbReference type="ExpressionAtlas" id="Q10NQ3">
    <property type="expression patterns" value="baseline and differential"/>
</dbReference>
<dbReference type="GO" id="GO:0005737">
    <property type="term" value="C:cytoplasm"/>
    <property type="evidence" value="ECO:0000314"/>
    <property type="project" value="UniProtKB"/>
</dbReference>
<dbReference type="GO" id="GO:0005829">
    <property type="term" value="C:cytosol"/>
    <property type="evidence" value="ECO:0000318"/>
    <property type="project" value="GO_Central"/>
</dbReference>
<dbReference type="GO" id="GO:0030139">
    <property type="term" value="C:endocytic vesicle"/>
    <property type="evidence" value="ECO:0000318"/>
    <property type="project" value="GO_Central"/>
</dbReference>
<dbReference type="GO" id="GO:0000325">
    <property type="term" value="C:plant-type vacuole"/>
    <property type="evidence" value="ECO:0000314"/>
    <property type="project" value="UniProtKB"/>
</dbReference>
<dbReference type="GO" id="GO:0005802">
    <property type="term" value="C:trans-Golgi network"/>
    <property type="evidence" value="ECO:0000314"/>
    <property type="project" value="UniProtKB"/>
</dbReference>
<dbReference type="GO" id="GO:0005525">
    <property type="term" value="F:GTP binding"/>
    <property type="evidence" value="ECO:0007669"/>
    <property type="project" value="UniProtKB-KW"/>
</dbReference>
<dbReference type="GO" id="GO:0005096">
    <property type="term" value="F:GTPase activator activity"/>
    <property type="evidence" value="ECO:0007669"/>
    <property type="project" value="UniProtKB-KW"/>
</dbReference>
<dbReference type="GO" id="GO:0005085">
    <property type="term" value="F:guanyl-nucleotide exchange factor activity"/>
    <property type="evidence" value="ECO:0000315"/>
    <property type="project" value="UniProtKB"/>
</dbReference>
<dbReference type="GO" id="GO:0031267">
    <property type="term" value="F:small GTPase binding"/>
    <property type="evidence" value="ECO:0000318"/>
    <property type="project" value="GO_Central"/>
</dbReference>
<dbReference type="GO" id="GO:0006886">
    <property type="term" value="P:intracellular protein transport"/>
    <property type="evidence" value="ECO:0000315"/>
    <property type="project" value="UniProtKB"/>
</dbReference>
<dbReference type="GO" id="GO:0016192">
    <property type="term" value="P:vesicle-mediated transport"/>
    <property type="evidence" value="ECO:0007669"/>
    <property type="project" value="InterPro"/>
</dbReference>
<dbReference type="FunFam" id="1.10.246.120:FF:000003">
    <property type="entry name" value="Vacuolar protein sorting-associated protein 9A"/>
    <property type="match status" value="1"/>
</dbReference>
<dbReference type="FunFam" id="1.20.1050.80:FF:000007">
    <property type="entry name" value="Vacuolar protein sorting-associated protein 9A"/>
    <property type="match status" value="1"/>
</dbReference>
<dbReference type="Gene3D" id="1.10.246.120">
    <property type="match status" value="1"/>
</dbReference>
<dbReference type="Gene3D" id="1.20.1050.80">
    <property type="entry name" value="VPS9 domain"/>
    <property type="match status" value="1"/>
</dbReference>
<dbReference type="InterPro" id="IPR041545">
    <property type="entry name" value="DUF5601"/>
</dbReference>
<dbReference type="InterPro" id="IPR003123">
    <property type="entry name" value="VPS9"/>
</dbReference>
<dbReference type="InterPro" id="IPR045046">
    <property type="entry name" value="Vps9-like"/>
</dbReference>
<dbReference type="InterPro" id="IPR037191">
    <property type="entry name" value="VPS9_dom_sf"/>
</dbReference>
<dbReference type="PANTHER" id="PTHR23101:SF25">
    <property type="entry name" value="GTPASE-ACTIVATING PROTEIN AND VPS9 DOMAIN-CONTAINING PROTEIN 1"/>
    <property type="match status" value="1"/>
</dbReference>
<dbReference type="PANTHER" id="PTHR23101">
    <property type="entry name" value="RAB GDP/GTP EXCHANGE FACTOR"/>
    <property type="match status" value="1"/>
</dbReference>
<dbReference type="Pfam" id="PF18151">
    <property type="entry name" value="DUF5601"/>
    <property type="match status" value="1"/>
</dbReference>
<dbReference type="Pfam" id="PF02204">
    <property type="entry name" value="VPS9"/>
    <property type="match status" value="1"/>
</dbReference>
<dbReference type="SMART" id="SM00167">
    <property type="entry name" value="VPS9"/>
    <property type="match status" value="1"/>
</dbReference>
<dbReference type="SUPFAM" id="SSF109993">
    <property type="entry name" value="VPS9 domain"/>
    <property type="match status" value="1"/>
</dbReference>
<dbReference type="PROSITE" id="PS51205">
    <property type="entry name" value="VPS9"/>
    <property type="match status" value="1"/>
</dbReference>
<keyword id="KW-0963">Cytoplasm</keyword>
<keyword id="KW-0333">Golgi apparatus</keyword>
<keyword id="KW-0342">GTP-binding</keyword>
<keyword id="KW-0343">GTPase activation</keyword>
<keyword id="KW-0547">Nucleotide-binding</keyword>
<keyword id="KW-0653">Protein transport</keyword>
<keyword id="KW-1185">Reference proteome</keyword>
<keyword id="KW-0813">Transport</keyword>
<protein>
    <recommendedName>
        <fullName evidence="6">Vacuolar protein sorting-associated protein 9A</fullName>
        <shortName evidence="6">OsVPS9A</shortName>
    </recommendedName>
    <alternativeName>
        <fullName evidence="6">Protein GLUTELIN PRECURSOR ACCUMULATION 2</fullName>
    </alternativeName>
</protein>
<gene>
    <name evidence="6" type="primary">VPS9A</name>
    <name evidence="6" type="synonym">GPA2</name>
    <name evidence="10" type="ordered locus">Os03g0262900</name>
    <name evidence="9" type="ordered locus">LOC_Os03g15650</name>
    <name evidence="11" type="ORF">OsJ_10226</name>
</gene>
<evidence type="ECO:0000250" key="1">
    <source>
        <dbReference type="UniProtKB" id="Q9LT31"/>
    </source>
</evidence>
<evidence type="ECO:0000255" key="2">
    <source>
        <dbReference type="PROSITE-ProRule" id="PRU00550"/>
    </source>
</evidence>
<evidence type="ECO:0000256" key="3">
    <source>
        <dbReference type="SAM" id="MobiDB-lite"/>
    </source>
</evidence>
<evidence type="ECO:0000269" key="4">
    <source>
    </source>
</evidence>
<evidence type="ECO:0000269" key="5">
    <source>
    </source>
</evidence>
<evidence type="ECO:0000303" key="6">
    <source>
    </source>
</evidence>
<evidence type="ECO:0000305" key="7"/>
<evidence type="ECO:0000305" key="8">
    <source>
    </source>
</evidence>
<evidence type="ECO:0000312" key="9">
    <source>
        <dbReference type="EMBL" id="ABF95105.1"/>
    </source>
</evidence>
<evidence type="ECO:0000312" key="10">
    <source>
        <dbReference type="EMBL" id="BAS83374.1"/>
    </source>
</evidence>
<evidence type="ECO:0000312" key="11">
    <source>
        <dbReference type="EMBL" id="EEE58741.1"/>
    </source>
</evidence>
<name>VPS9A_ORYSJ</name>
<sequence length="480" mass="53841">MDGGGGGDAFGSATAPLAWHDFLERMRQPSAADFVKSIKGFIVTFSNRAPDPEHDSAAVQEFLENMEGAFRAHTPWAGSSEEELESAGEGLEKYVMTKLFNRVFASVPEDVKSDEELFEKMSLLQQFIRPENLDIKPEYQSETSWLLAQKELQKINMYKAPRDKLACILNCCKVINNLLLNASIVSNENPPGADEFLPVLIYVTIKANPPQLHSNLLYIQRYRRQSRLVSEAQYFFTNILSAESFIWNIDGESLSMDERDFQKKMDLARERMLGLSASSENQDNQNNLDVREQKSQTLKASRDSDVNLSLKDNFQGPGLEMRRDSDASSNPVERVQSISDLEKKGAAELLKDDDLNKKIQEYPFLFARSGDLTVADVENLLNSYKQLVLKYVALSQGMGINLENPPVQSMQTVSDLVESEEPKNVKNAVNFSEGSSKTSDDIKNDTLYSEVDNTGTQQTAVDPSYQKAQQDEASDQPEHA</sequence>
<organism>
    <name type="scientific">Oryza sativa subsp. japonica</name>
    <name type="common">Rice</name>
    <dbReference type="NCBI Taxonomy" id="39947"/>
    <lineage>
        <taxon>Eukaryota</taxon>
        <taxon>Viridiplantae</taxon>
        <taxon>Streptophyta</taxon>
        <taxon>Embryophyta</taxon>
        <taxon>Tracheophyta</taxon>
        <taxon>Spermatophyta</taxon>
        <taxon>Magnoliopsida</taxon>
        <taxon>Liliopsida</taxon>
        <taxon>Poales</taxon>
        <taxon>Poaceae</taxon>
        <taxon>BOP clade</taxon>
        <taxon>Oryzoideae</taxon>
        <taxon>Oryzeae</taxon>
        <taxon>Oryzinae</taxon>
        <taxon>Oryza</taxon>
        <taxon>Oryza sativa</taxon>
    </lineage>
</organism>
<accession>Q10NQ3</accession>
<accession>Q0DT93</accession>
<proteinExistence type="evidence at protein level"/>
<reference key="1">
    <citation type="journal article" date="2005" name="Genome Res.">
        <title>Sequence, annotation, and analysis of synteny between rice chromosome 3 and diverged grass species.</title>
        <authorList>
            <consortium name="The rice chromosome 3 sequencing consortium"/>
            <person name="Buell C.R."/>
            <person name="Yuan Q."/>
            <person name="Ouyang S."/>
            <person name="Liu J."/>
            <person name="Zhu W."/>
            <person name="Wang A."/>
            <person name="Maiti R."/>
            <person name="Haas B."/>
            <person name="Wortman J."/>
            <person name="Pertea M."/>
            <person name="Jones K.M."/>
            <person name="Kim M."/>
            <person name="Overton L."/>
            <person name="Tsitrin T."/>
            <person name="Fadrosh D."/>
            <person name="Bera J."/>
            <person name="Weaver B."/>
            <person name="Jin S."/>
            <person name="Johri S."/>
            <person name="Reardon M."/>
            <person name="Webb K."/>
            <person name="Hill J."/>
            <person name="Moffat K."/>
            <person name="Tallon L."/>
            <person name="Van Aken S."/>
            <person name="Lewis M."/>
            <person name="Utterback T."/>
            <person name="Feldblyum T."/>
            <person name="Zismann V."/>
            <person name="Iobst S."/>
            <person name="Hsiao J."/>
            <person name="de Vazeille A.R."/>
            <person name="Salzberg S.L."/>
            <person name="White O."/>
            <person name="Fraser C.M."/>
            <person name="Yu Y."/>
            <person name="Kim H."/>
            <person name="Rambo T."/>
            <person name="Currie J."/>
            <person name="Collura K."/>
            <person name="Kernodle-Thompson S."/>
            <person name="Wei F."/>
            <person name="Kudrna K."/>
            <person name="Ammiraju J.S.S."/>
            <person name="Luo M."/>
            <person name="Goicoechea J.L."/>
            <person name="Wing R.A."/>
            <person name="Henry D."/>
            <person name="Oates R."/>
            <person name="Palmer M."/>
            <person name="Pries G."/>
            <person name="Saski C."/>
            <person name="Simmons J."/>
            <person name="Soderlund C."/>
            <person name="Nelson W."/>
            <person name="de la Bastide M."/>
            <person name="Spiegel L."/>
            <person name="Nascimento L."/>
            <person name="Huang E."/>
            <person name="Preston R."/>
            <person name="Zutavern T."/>
            <person name="Palmer L."/>
            <person name="O'Shaughnessy A."/>
            <person name="Dike S."/>
            <person name="McCombie W.R."/>
            <person name="Minx P."/>
            <person name="Cordum H."/>
            <person name="Wilson R."/>
            <person name="Jin W."/>
            <person name="Lee H.R."/>
            <person name="Jiang J."/>
            <person name="Jackson S."/>
        </authorList>
    </citation>
    <scope>NUCLEOTIDE SEQUENCE [LARGE SCALE GENOMIC DNA]</scope>
    <source>
        <strain>cv. Nipponbare</strain>
    </source>
</reference>
<reference key="2">
    <citation type="journal article" date="2005" name="Nature">
        <title>The map-based sequence of the rice genome.</title>
        <authorList>
            <consortium name="International rice genome sequencing project (IRGSP)"/>
        </authorList>
    </citation>
    <scope>NUCLEOTIDE SEQUENCE [LARGE SCALE GENOMIC DNA]</scope>
    <source>
        <strain>cv. Nipponbare</strain>
    </source>
</reference>
<reference key="3">
    <citation type="journal article" date="2008" name="Nucleic Acids Res.">
        <title>The rice annotation project database (RAP-DB): 2008 update.</title>
        <authorList>
            <consortium name="The rice annotation project (RAP)"/>
        </authorList>
    </citation>
    <scope>GENOME REANNOTATION</scope>
    <source>
        <strain>cv. Nipponbare</strain>
    </source>
</reference>
<reference key="4">
    <citation type="journal article" date="2013" name="Rice">
        <title>Improvement of the Oryza sativa Nipponbare reference genome using next generation sequence and optical map data.</title>
        <authorList>
            <person name="Kawahara Y."/>
            <person name="de la Bastide M."/>
            <person name="Hamilton J.P."/>
            <person name="Kanamori H."/>
            <person name="McCombie W.R."/>
            <person name="Ouyang S."/>
            <person name="Schwartz D.C."/>
            <person name="Tanaka T."/>
            <person name="Wu J."/>
            <person name="Zhou S."/>
            <person name="Childs K.L."/>
            <person name="Davidson R.M."/>
            <person name="Lin H."/>
            <person name="Quesada-Ocampo L."/>
            <person name="Vaillancourt B."/>
            <person name="Sakai H."/>
            <person name="Lee S.S."/>
            <person name="Kim J."/>
            <person name="Numa H."/>
            <person name="Itoh T."/>
            <person name="Buell C.R."/>
            <person name="Matsumoto T."/>
        </authorList>
    </citation>
    <scope>GENOME REANNOTATION</scope>
    <source>
        <strain>cv. Nipponbare</strain>
    </source>
</reference>
<reference key="5">
    <citation type="journal article" date="2005" name="PLoS Biol.">
        <title>The genomes of Oryza sativa: a history of duplications.</title>
        <authorList>
            <person name="Yu J."/>
            <person name="Wang J."/>
            <person name="Lin W."/>
            <person name="Li S."/>
            <person name="Li H."/>
            <person name="Zhou J."/>
            <person name="Ni P."/>
            <person name="Dong W."/>
            <person name="Hu S."/>
            <person name="Zeng C."/>
            <person name="Zhang J."/>
            <person name="Zhang Y."/>
            <person name="Li R."/>
            <person name="Xu Z."/>
            <person name="Li S."/>
            <person name="Li X."/>
            <person name="Zheng H."/>
            <person name="Cong L."/>
            <person name="Lin L."/>
            <person name="Yin J."/>
            <person name="Geng J."/>
            <person name="Li G."/>
            <person name="Shi J."/>
            <person name="Liu J."/>
            <person name="Lv H."/>
            <person name="Li J."/>
            <person name="Wang J."/>
            <person name="Deng Y."/>
            <person name="Ran L."/>
            <person name="Shi X."/>
            <person name="Wang X."/>
            <person name="Wu Q."/>
            <person name="Li C."/>
            <person name="Ren X."/>
            <person name="Wang J."/>
            <person name="Wang X."/>
            <person name="Li D."/>
            <person name="Liu D."/>
            <person name="Zhang X."/>
            <person name="Ji Z."/>
            <person name="Zhao W."/>
            <person name="Sun Y."/>
            <person name="Zhang Z."/>
            <person name="Bao J."/>
            <person name="Han Y."/>
            <person name="Dong L."/>
            <person name="Ji J."/>
            <person name="Chen P."/>
            <person name="Wu S."/>
            <person name="Liu J."/>
            <person name="Xiao Y."/>
            <person name="Bu D."/>
            <person name="Tan J."/>
            <person name="Yang L."/>
            <person name="Ye C."/>
            <person name="Zhang J."/>
            <person name="Xu J."/>
            <person name="Zhou Y."/>
            <person name="Yu Y."/>
            <person name="Zhang B."/>
            <person name="Zhuang S."/>
            <person name="Wei H."/>
            <person name="Liu B."/>
            <person name="Lei M."/>
            <person name="Yu H."/>
            <person name="Li Y."/>
            <person name="Xu H."/>
            <person name="Wei S."/>
            <person name="He X."/>
            <person name="Fang L."/>
            <person name="Zhang Z."/>
            <person name="Zhang Y."/>
            <person name="Huang X."/>
            <person name="Su Z."/>
            <person name="Tong W."/>
            <person name="Li J."/>
            <person name="Tong Z."/>
            <person name="Li S."/>
            <person name="Ye J."/>
            <person name="Wang L."/>
            <person name="Fang L."/>
            <person name="Lei T."/>
            <person name="Chen C.-S."/>
            <person name="Chen H.-C."/>
            <person name="Xu Z."/>
            <person name="Li H."/>
            <person name="Huang H."/>
            <person name="Zhang F."/>
            <person name="Xu H."/>
            <person name="Li N."/>
            <person name="Zhao C."/>
            <person name="Li S."/>
            <person name="Dong L."/>
            <person name="Huang Y."/>
            <person name="Li L."/>
            <person name="Xi Y."/>
            <person name="Qi Q."/>
            <person name="Li W."/>
            <person name="Zhang B."/>
            <person name="Hu W."/>
            <person name="Zhang Y."/>
            <person name="Tian X."/>
            <person name="Jiao Y."/>
            <person name="Liang X."/>
            <person name="Jin J."/>
            <person name="Gao L."/>
            <person name="Zheng W."/>
            <person name="Hao B."/>
            <person name="Liu S.-M."/>
            <person name="Wang W."/>
            <person name="Yuan L."/>
            <person name="Cao M."/>
            <person name="McDermott J."/>
            <person name="Samudrala R."/>
            <person name="Wang J."/>
            <person name="Wong G.K.-S."/>
            <person name="Yang H."/>
        </authorList>
    </citation>
    <scope>NUCLEOTIDE SEQUENCE [LARGE SCALE GENOMIC DNA]</scope>
    <source>
        <strain>cv. Nipponbare</strain>
    </source>
</reference>
<reference key="6">
    <citation type="journal article" date="2013" name="Mol. Plant">
        <title>OsVPS9A functions cooperatively with OsRAB5A to regulate post-Golgi dense vesicle-mediated storage protein trafficking to the protein storage vacuole in rice endosperm cells.</title>
        <authorList>
            <person name="Liu F."/>
            <person name="Ren Y."/>
            <person name="Wang Y."/>
            <person name="Peng C."/>
            <person name="Zhou K."/>
            <person name="Lv J."/>
            <person name="Guo X."/>
            <person name="Zhang X."/>
            <person name="Zhong M."/>
            <person name="Zhao S."/>
            <person name="Jiang L."/>
            <person name="Wang H."/>
            <person name="Bao Y."/>
            <person name="Wan J."/>
        </authorList>
    </citation>
    <scope>FUNCTION</scope>
    <scope>INTERACTION WITH RAB5A</scope>
    <scope>DISRUPTION PHENOTYPE</scope>
</reference>
<reference key="7">
    <citation type="journal article" date="2014" name="Plant Cell">
        <title>GLUTELIN PRECURSOR ACCUMULATION3 encodes a regulator of post-Golgi vesicular traffic essential for vacuolar protein sorting in rice endosperm.</title>
        <authorList>
            <person name="Ren Y."/>
            <person name="Wang Y."/>
            <person name="Liu F."/>
            <person name="Zhou K."/>
            <person name="Ding Y."/>
            <person name="Zhou F."/>
            <person name="Wang Y."/>
            <person name="Liu K."/>
            <person name="Gan L."/>
            <person name="Ma W."/>
            <person name="Han X."/>
            <person name="Zhang X."/>
            <person name="Guo X."/>
            <person name="Wu F."/>
            <person name="Cheng Z."/>
            <person name="Wang J."/>
            <person name="Lei C."/>
            <person name="Lin Q."/>
            <person name="Jiang L."/>
            <person name="Wu C."/>
            <person name="Bao Y."/>
            <person name="Wang H."/>
            <person name="Wan J."/>
        </authorList>
    </citation>
    <scope>INTERACTION WITH GPA3 AND RAB5A</scope>
    <scope>SUBCELLULAR LOCATION</scope>
</reference>
<comment type="function">
    <text evidence="4 8">Functions as a guanine nucleotide exchange factor (GEF) for Rab small GTPases. Activates specifically RAB5A protein (Probable). Functions cooperatively with RAB5A to regulate post-Golgi dense vesicle-mediated transport of storage proteins to the type II protein bodies (PBII) protein storage vacuoles in developing endosperm (PubMed:23723154).</text>
</comment>
<comment type="subunit">
    <text evidence="4 5">Interacts with RAB5A (PubMed:23723154, PubMed:24488962). Interacts with GPA3 (via C-terminus) (PubMed:24488962).</text>
</comment>
<comment type="subcellular location">
    <subcellularLocation>
        <location evidence="5">Cytoplasm</location>
    </subcellularLocation>
    <subcellularLocation>
        <location evidence="5">Golgi apparatus</location>
        <location evidence="5">trans-Golgi network</location>
    </subcellularLocation>
    <subcellularLocation>
        <location evidence="5">Prevacuolar compartment</location>
    </subcellularLocation>
    <text evidence="5">Expressed in trans-Golgi network and prevacuolar compartment when recruited by GPA3.</text>
</comment>
<comment type="disruption phenotype">
    <text evidence="4">Accumulation of proglutelins in seed endosperm (PubMed:23723154). Abnormal organization of the protein storage vesicles (type II protein bodies), and formation of secretory vesicle-like structures (paramural bodies) charged with dense vesicles in seed endosperm (PubMed:23723154).</text>
</comment>
<comment type="sequence caution" evidence="7">
    <conflict type="erroneous gene model prediction">
        <sequence resource="EMBL-CDS" id="BAF11545"/>
    </conflict>
</comment>
<feature type="chain" id="PRO_0000445092" description="Vacuolar protein sorting-associated protein 9A">
    <location>
        <begin position="1"/>
        <end position="480"/>
    </location>
</feature>
<feature type="domain" description="VPS9" evidence="2">
    <location>
        <begin position="111"/>
        <end position="255"/>
    </location>
</feature>
<feature type="region of interest" description="Disordered" evidence="3">
    <location>
        <begin position="276"/>
        <end position="338"/>
    </location>
</feature>
<feature type="region of interest" description="Disordered" evidence="3">
    <location>
        <begin position="418"/>
        <end position="480"/>
    </location>
</feature>
<feature type="compositionally biased region" description="Polar residues" evidence="3">
    <location>
        <begin position="276"/>
        <end position="288"/>
    </location>
</feature>
<feature type="compositionally biased region" description="Basic and acidic residues" evidence="3">
    <location>
        <begin position="289"/>
        <end position="305"/>
    </location>
</feature>
<feature type="compositionally biased region" description="Polar residues" evidence="3">
    <location>
        <begin position="327"/>
        <end position="338"/>
    </location>
</feature>
<feature type="compositionally biased region" description="Polar residues" evidence="3">
    <location>
        <begin position="427"/>
        <end position="437"/>
    </location>
</feature>
<feature type="compositionally biased region" description="Polar residues" evidence="3">
    <location>
        <begin position="451"/>
        <end position="461"/>
    </location>
</feature>
<feature type="binding site" evidence="1">
    <location>
        <position position="189"/>
    </location>
    <ligand>
        <name>GTP</name>
        <dbReference type="ChEBI" id="CHEBI:37565"/>
    </ligand>
</feature>
<feature type="binding site" evidence="1">
    <location>
        <position position="194"/>
    </location>
    <ligand>
        <name>GTP</name>
        <dbReference type="ChEBI" id="CHEBI:37565"/>
    </ligand>
</feature>